<sequence>MFDKHTHTLIAQRLDQAEKQREQIRAISLDYPEITIEDAYAVQREWVRLKIAEGRTLKGHKIGLTSKAMQASSQISEPDYGALLDDMFFHDGSDIPTDRFIVPRIEVELAFVLAKPLRGPNCTLFDVYNATDYVIPALELIDARCHNIDPETQRPRKVFDTISDNAANAGVILGGRPIKPDELDLRWISALMYRNGVIEETGVAAGVLNHPANGVAWLANKLAPYDVQLEAGQIILGGSFTRPVPARKGDTFHVDYGNMGSISCRFV</sequence>
<feature type="chain" id="PRO_0000084042" description="2-oxo-hept-4-ene-1,7-dioate hydratase">
    <location>
        <begin position="1"/>
        <end position="267"/>
    </location>
</feature>
<feature type="binding site" evidence="1 6 7">
    <location>
        <position position="106"/>
    </location>
    <ligand>
        <name>Mg(2+)</name>
        <dbReference type="ChEBI" id="CHEBI:18420"/>
    </ligand>
</feature>
<feature type="binding site" evidence="1 6 7">
    <location>
        <position position="108"/>
    </location>
    <ligand>
        <name>Mg(2+)</name>
        <dbReference type="ChEBI" id="CHEBI:18420"/>
    </ligand>
</feature>
<feature type="binding site" evidence="1 6 7">
    <location>
        <position position="139"/>
    </location>
    <ligand>
        <name>Mg(2+)</name>
        <dbReference type="ChEBI" id="CHEBI:18420"/>
    </ligand>
</feature>
<feature type="sequence conflict" description="In Ref. 1; CAA57202." evidence="4" ref="1">
    <original>DDMFFHDGSDIPTD</original>
    <variation>HDNVLPRWQRY</variation>
    <location>
        <begin position="85"/>
        <end position="98"/>
    </location>
</feature>
<feature type="sequence conflict" description="In Ref. 1; CAA57202." evidence="4" ref="1">
    <original>A</original>
    <variation>S</variation>
    <location>
        <position position="169"/>
    </location>
</feature>
<dbReference type="EC" id="4.2.1.163" evidence="1 2"/>
<dbReference type="EMBL" id="X81446">
    <property type="protein sequence ID" value="CAA57202.1"/>
    <property type="molecule type" value="Genomic_DNA"/>
</dbReference>
<dbReference type="EMBL" id="AF036583">
    <property type="protein sequence ID" value="AAB91474.1"/>
    <property type="molecule type" value="Genomic_DNA"/>
</dbReference>
<dbReference type="PIR" id="I41083">
    <property type="entry name" value="I41083"/>
</dbReference>
<dbReference type="PDB" id="2EB4">
    <property type="method" value="X-ray"/>
    <property type="resolution" value="1.60 A"/>
    <property type="chains" value="A/B/C/D/E=1-267"/>
</dbReference>
<dbReference type="PDB" id="2EB5">
    <property type="method" value="X-ray"/>
    <property type="resolution" value="1.70 A"/>
    <property type="chains" value="A/B/C/D/E=1-267"/>
</dbReference>
<dbReference type="PDB" id="2EB6">
    <property type="method" value="X-ray"/>
    <property type="resolution" value="1.69 A"/>
    <property type="chains" value="A/B/C/D/E=1-267"/>
</dbReference>
<dbReference type="PDBsum" id="2EB4"/>
<dbReference type="PDBsum" id="2EB5"/>
<dbReference type="PDBsum" id="2EB6"/>
<dbReference type="SMR" id="P42270"/>
<dbReference type="STRING" id="585034.ECIAI1_4571"/>
<dbReference type="eggNOG" id="COG3971">
    <property type="taxonomic scope" value="Bacteria"/>
</dbReference>
<dbReference type="OMA" id="IQRAWVA"/>
<dbReference type="BRENDA" id="4.2.1.163">
    <property type="organism ID" value="2026"/>
</dbReference>
<dbReference type="UniPathway" id="UPA00208">
    <property type="reaction ID" value="UER00421"/>
</dbReference>
<dbReference type="GO" id="GO:0005737">
    <property type="term" value="C:cytoplasm"/>
    <property type="evidence" value="ECO:0007669"/>
    <property type="project" value="TreeGrafter"/>
</dbReference>
<dbReference type="GO" id="GO:0018817">
    <property type="term" value="F:2-oxo-hept-3-ene-1,7-dioate hydratase activity"/>
    <property type="evidence" value="ECO:0007669"/>
    <property type="project" value="InterPro"/>
</dbReference>
<dbReference type="GO" id="GO:0008684">
    <property type="term" value="F:2-oxopent-4-enoate hydratase activity"/>
    <property type="evidence" value="ECO:0007669"/>
    <property type="project" value="TreeGrafter"/>
</dbReference>
<dbReference type="GO" id="GO:0046872">
    <property type="term" value="F:metal ion binding"/>
    <property type="evidence" value="ECO:0007669"/>
    <property type="project" value="UniProtKB-KW"/>
</dbReference>
<dbReference type="GO" id="GO:0009056">
    <property type="term" value="P:catabolic process"/>
    <property type="evidence" value="ECO:0007669"/>
    <property type="project" value="UniProtKB-KW"/>
</dbReference>
<dbReference type="FunFam" id="3.90.850.10:FF:000001">
    <property type="entry name" value="2-oxo-hepta-3-ene-1,7-dioic acid hydratase"/>
    <property type="match status" value="1"/>
</dbReference>
<dbReference type="Gene3D" id="3.90.850.10">
    <property type="entry name" value="Fumarylacetoacetase-like, C-terminal domain"/>
    <property type="match status" value="1"/>
</dbReference>
<dbReference type="InterPro" id="IPR011234">
    <property type="entry name" value="Fumarylacetoacetase-like_C"/>
</dbReference>
<dbReference type="InterPro" id="IPR036663">
    <property type="entry name" value="Fumarylacetoacetase_C_sf"/>
</dbReference>
<dbReference type="InterPro" id="IPR012690">
    <property type="entry name" value="HpcG"/>
</dbReference>
<dbReference type="InterPro" id="IPR050772">
    <property type="entry name" value="Hydratase-Decarb/MhpD_sf"/>
</dbReference>
<dbReference type="NCBIfam" id="TIGR02312">
    <property type="entry name" value="HpaH"/>
    <property type="match status" value="1"/>
</dbReference>
<dbReference type="PANTHER" id="PTHR30143:SF0">
    <property type="entry name" value="2-KETO-4-PENTENOATE HYDRATASE"/>
    <property type="match status" value="1"/>
</dbReference>
<dbReference type="PANTHER" id="PTHR30143">
    <property type="entry name" value="ACID HYDRATASE"/>
    <property type="match status" value="1"/>
</dbReference>
<dbReference type="Pfam" id="PF01557">
    <property type="entry name" value="FAA_hydrolase"/>
    <property type="match status" value="1"/>
</dbReference>
<dbReference type="SUPFAM" id="SSF56529">
    <property type="entry name" value="FAH"/>
    <property type="match status" value="1"/>
</dbReference>
<protein>
    <recommendedName>
        <fullName evidence="3">2-oxo-hept-4-ene-1,7-dioate hydratase</fullName>
        <shortName evidence="3">OHED hydratase</shortName>
        <ecNumber evidence="1 2">4.2.1.163</ecNumber>
    </recommendedName>
</protein>
<proteinExistence type="evidence at protein level"/>
<gene>
    <name evidence="3" type="primary">hpcG</name>
</gene>
<name>HPCG_ECOLX</name>
<keyword id="KW-0002">3D-structure</keyword>
<keyword id="KW-0058">Aromatic hydrocarbons catabolism</keyword>
<keyword id="KW-0456">Lyase</keyword>
<keyword id="KW-0460">Magnesium</keyword>
<keyword id="KW-0479">Metal-binding</keyword>
<organism>
    <name type="scientific">Escherichia coli</name>
    <dbReference type="NCBI Taxonomy" id="562"/>
    <lineage>
        <taxon>Bacteria</taxon>
        <taxon>Pseudomonadati</taxon>
        <taxon>Pseudomonadota</taxon>
        <taxon>Gammaproteobacteria</taxon>
        <taxon>Enterobacterales</taxon>
        <taxon>Enterobacteriaceae</taxon>
        <taxon>Escherichia</taxon>
    </lineage>
</organism>
<comment type="function">
    <text evidence="2">Transforms 2-oxo-hept-4-ene-1,7-dioate (OHED) into 4-hydroxy-2-oxoheptanedioate, a step in the 4-hydroxyphenylacetic acid (4-HPA) degradation pathway.</text>
</comment>
<comment type="catalytic activity">
    <reaction evidence="1 2">
        <text>(4Z)-2-oxohept-4-enedioate + H2O = (4S)-4-hydroxy-2-oxoheptanedioate</text>
        <dbReference type="Rhea" id="RHEA:42072"/>
        <dbReference type="ChEBI" id="CHEBI:15377"/>
        <dbReference type="ChEBI" id="CHEBI:87507"/>
        <dbReference type="ChEBI" id="CHEBI:87522"/>
        <dbReference type="EC" id="4.2.1.163"/>
    </reaction>
</comment>
<comment type="cofactor">
    <cofactor evidence="1">
        <name>Mg(2+)</name>
        <dbReference type="ChEBI" id="CHEBI:18420"/>
    </cofactor>
    <text evidence="1">Binds 1 Mg(2+) ion per subunit.</text>
</comment>
<comment type="pathway">
    <text>Aromatic compound metabolism; 4-hydroxyphenylacetate degradation; pyruvate and succinate semialdehyde from 4-hydroxyphenylacetate: step 6/7.</text>
</comment>
<comment type="subunit">
    <text evidence="1">Homodecamer.</text>
</comment>
<comment type="similarity">
    <text evidence="4">Belongs to the hydratase/decarboxylase family.</text>
</comment>
<evidence type="ECO:0000269" key="1">
    <source>
    </source>
</evidence>
<evidence type="ECO:0000269" key="2">
    <source ref="3"/>
</evidence>
<evidence type="ECO:0000303" key="3">
    <source ref="3"/>
</evidence>
<evidence type="ECO:0000305" key="4"/>
<evidence type="ECO:0000312" key="5">
    <source>
        <dbReference type="EMBL" id="AAB91474.1"/>
    </source>
</evidence>
<evidence type="ECO:0007744" key="6">
    <source>
        <dbReference type="PDB" id="2EB5"/>
    </source>
</evidence>
<evidence type="ECO:0007744" key="7">
    <source>
        <dbReference type="PDB" id="2EB6"/>
    </source>
</evidence>
<accession>P42270</accession>
<reference key="1">
    <citation type="journal article" date="1995" name="Gene">
        <title>Sequence of the hpcC and hpcG genes of the meta-fission homoprotocatechuic acid pathway of Escherichia coli C: nearly 40% amino-acid identity with the analogous enzymes of the catechol pathway.</title>
        <authorList>
            <person name="Roper D.I."/>
            <person name="Stringfellow J.M."/>
            <person name="Cooper R.A."/>
        </authorList>
    </citation>
    <scope>NUCLEOTIDE SEQUENCE [GENOMIC DNA]</scope>
    <source>
        <strain>C</strain>
    </source>
</reference>
<reference key="2">
    <citation type="submission" date="1997-12" db="EMBL/GenBank/DDBJ databases">
        <title>OHED hydratase.</title>
        <authorList>
            <person name="Burks E.A."/>
            <person name="Whitman C.P."/>
        </authorList>
    </citation>
    <scope>NUCLEOTIDE SEQUENCE [GENOMIC DNA]</scope>
    <source>
        <strain evidence="5">C</strain>
    </source>
</reference>
<reference key="3">
    <citation type="journal article" date="1998" name="J. Am. Chem. Soc.">
        <title>Stereochemical and isotopic labeling studies of 2-oxo-hept-4-ene-1,7-dioate hydratase: evidence for an enzyme-catalyzed ketonization step in the hydration reaction.</title>
        <authorList>
            <person name="Burks E.A."/>
            <person name="Johnson W.H. Jr."/>
            <person name="Whitman C.P."/>
        </authorList>
    </citation>
    <scope>FUNCTION</scope>
    <scope>CATALYTIC ACTIVITY</scope>
    <scope>ENZYME KINETICS</scope>
    <scope>REACTION MECHANISM</scope>
    <source>
        <strain>C</strain>
    </source>
</reference>
<reference key="4">
    <citation type="journal article" date="2007" name="J. Mol. Biol.">
        <title>Structure and mechanism of HpcG, a hydratase in the homoprotocatechuate degradation pathway of Escherichia coli.</title>
        <authorList>
            <person name="Izumi A."/>
            <person name="Rea D."/>
            <person name="Adachi T."/>
            <person name="Unzai S."/>
            <person name="Park S.Y."/>
            <person name="Roper D.I."/>
            <person name="Tame J.R."/>
        </authorList>
    </citation>
    <scope>X-RAY CRYSTALLOGRAPHY (1.60 ANGSTROMS) OF APOENZYME AND IN COMPLEX WITH MAGNESIUM AND OXALATE</scope>
    <scope>CATALYTIC ACTIVITY</scope>
    <scope>SUBUNIT</scope>
    <scope>COFACTOR</scope>
    <scope>REACTION MECHANISM</scope>
    <source>
        <strain>C</strain>
    </source>
</reference>